<proteinExistence type="inferred from homology"/>
<sequence>MKNITDSFLCLGYWPSAGSFGFNTDILATNPINLSVVLGVLVFFGKGVLSDLLDNRKQKILRTIRNSEELREGAIEQLEKAQARLRKVETEADRFRVNGYSEIEREKLNLINSIYTTLEQLENYKNEAIHFEQQRVINQVRQRVLQQALQGALGTLKSCLNNELHLRTVSANIGMFGTMKEKITD</sequence>
<name>ATPF_SOYBN</name>
<evidence type="ECO:0000255" key="1">
    <source>
        <dbReference type="HAMAP-Rule" id="MF_01398"/>
    </source>
</evidence>
<accession>Q2PMS9</accession>
<dbReference type="EMBL" id="DQ317523">
    <property type="protein sequence ID" value="ABC25129.1"/>
    <property type="molecule type" value="Genomic_DNA"/>
</dbReference>
<dbReference type="RefSeq" id="YP_538769.1">
    <property type="nucleotide sequence ID" value="NC_007942.1"/>
</dbReference>
<dbReference type="SMR" id="Q2PMS9"/>
<dbReference type="FunCoup" id="Q2PMS9">
    <property type="interactions" value="395"/>
</dbReference>
<dbReference type="STRING" id="3847.Q2PMS9"/>
<dbReference type="PaxDb" id="3847-GLYMA12G36098.1"/>
<dbReference type="GeneID" id="3989297"/>
<dbReference type="KEGG" id="gmx:3989297"/>
<dbReference type="eggNOG" id="ENOG502S22I">
    <property type="taxonomic scope" value="Eukaryota"/>
</dbReference>
<dbReference type="InParanoid" id="Q2PMS9"/>
<dbReference type="Proteomes" id="UP000008827">
    <property type="component" value="Chloroplast"/>
</dbReference>
<dbReference type="GO" id="GO:0009535">
    <property type="term" value="C:chloroplast thylakoid membrane"/>
    <property type="evidence" value="ECO:0007669"/>
    <property type="project" value="UniProtKB-SubCell"/>
</dbReference>
<dbReference type="GO" id="GO:0045259">
    <property type="term" value="C:proton-transporting ATP synthase complex"/>
    <property type="evidence" value="ECO:0007669"/>
    <property type="project" value="UniProtKB-KW"/>
</dbReference>
<dbReference type="GO" id="GO:0005524">
    <property type="term" value="F:ATP binding"/>
    <property type="evidence" value="ECO:0007669"/>
    <property type="project" value="UniProtKB-KW"/>
</dbReference>
<dbReference type="GO" id="GO:0046933">
    <property type="term" value="F:proton-transporting ATP synthase activity, rotational mechanism"/>
    <property type="evidence" value="ECO:0007669"/>
    <property type="project" value="UniProtKB-UniRule"/>
</dbReference>
<dbReference type="CDD" id="cd06503">
    <property type="entry name" value="ATP-synt_Fo_b"/>
    <property type="match status" value="1"/>
</dbReference>
<dbReference type="HAMAP" id="MF_01398">
    <property type="entry name" value="ATP_synth_b_bprime"/>
    <property type="match status" value="1"/>
</dbReference>
<dbReference type="InterPro" id="IPR002146">
    <property type="entry name" value="ATP_synth_b/b'su_bac/chlpt"/>
</dbReference>
<dbReference type="PANTHER" id="PTHR34264">
    <property type="entry name" value="ATP SYNTHASE SUBUNIT B, CHLOROPLASTIC"/>
    <property type="match status" value="1"/>
</dbReference>
<dbReference type="PANTHER" id="PTHR34264:SF3">
    <property type="entry name" value="ATP SYNTHASE SUBUNIT B, CHLOROPLASTIC"/>
    <property type="match status" value="1"/>
</dbReference>
<dbReference type="Pfam" id="PF00430">
    <property type="entry name" value="ATP-synt_B"/>
    <property type="match status" value="1"/>
</dbReference>
<organism>
    <name type="scientific">Glycine max</name>
    <name type="common">Soybean</name>
    <name type="synonym">Glycine hispida</name>
    <dbReference type="NCBI Taxonomy" id="3847"/>
    <lineage>
        <taxon>Eukaryota</taxon>
        <taxon>Viridiplantae</taxon>
        <taxon>Streptophyta</taxon>
        <taxon>Embryophyta</taxon>
        <taxon>Tracheophyta</taxon>
        <taxon>Spermatophyta</taxon>
        <taxon>Magnoliopsida</taxon>
        <taxon>eudicotyledons</taxon>
        <taxon>Gunneridae</taxon>
        <taxon>Pentapetalae</taxon>
        <taxon>rosids</taxon>
        <taxon>fabids</taxon>
        <taxon>Fabales</taxon>
        <taxon>Fabaceae</taxon>
        <taxon>Papilionoideae</taxon>
        <taxon>50 kb inversion clade</taxon>
        <taxon>NPAAA clade</taxon>
        <taxon>indigoferoid/millettioid clade</taxon>
        <taxon>Phaseoleae</taxon>
        <taxon>Glycine</taxon>
        <taxon>Glycine subgen. Soja</taxon>
    </lineage>
</organism>
<feature type="chain" id="PRO_0000277454" description="ATP synthase subunit b, chloroplastic">
    <location>
        <begin position="1"/>
        <end position="185"/>
    </location>
</feature>
<feature type="transmembrane region" description="Helical" evidence="1">
    <location>
        <begin position="27"/>
        <end position="49"/>
    </location>
</feature>
<protein>
    <recommendedName>
        <fullName evidence="1">ATP synthase subunit b, chloroplastic</fullName>
    </recommendedName>
    <alternativeName>
        <fullName evidence="1">ATP synthase F(0) sector subunit b</fullName>
    </alternativeName>
    <alternativeName>
        <fullName evidence="1">ATPase subunit I</fullName>
    </alternativeName>
</protein>
<gene>
    <name evidence="1" type="primary">atpF</name>
</gene>
<geneLocation type="chloroplast"/>
<comment type="function">
    <text evidence="1">F(1)F(0) ATP synthase produces ATP from ADP in the presence of a proton or sodium gradient. F-type ATPases consist of two structural domains, F(1) containing the extramembraneous catalytic core and F(0) containing the membrane proton channel, linked together by a central stalk and a peripheral stalk. During catalysis, ATP synthesis in the catalytic domain of F(1) is coupled via a rotary mechanism of the central stalk subunits to proton translocation.</text>
</comment>
<comment type="function">
    <text evidence="1">Component of the F(0) channel, it forms part of the peripheral stalk, linking F(1) to F(0).</text>
</comment>
<comment type="subunit">
    <text evidence="1">F-type ATPases have 2 components, F(1) - the catalytic core - and F(0) - the membrane proton channel. F(1) has five subunits: alpha(3), beta(3), gamma(1), delta(1), epsilon(1). F(0) has four main subunits: a(1), b(1), b'(1) and c(10-14). The alpha and beta chains form an alternating ring which encloses part of the gamma chain. F(1) is attached to F(0) by a central stalk formed by the gamma and epsilon chains, while a peripheral stalk is formed by the delta, b and b' chains.</text>
</comment>
<comment type="subcellular location">
    <subcellularLocation>
        <location evidence="1">Plastid</location>
        <location evidence="1">Chloroplast thylakoid membrane</location>
        <topology evidence="1">Single-pass membrane protein</topology>
    </subcellularLocation>
</comment>
<comment type="miscellaneous">
    <text>In plastids the F-type ATPase is also known as CF(1)CF(0).</text>
</comment>
<comment type="similarity">
    <text evidence="1">Belongs to the ATPase B chain family.</text>
</comment>
<keyword id="KW-0066">ATP synthesis</keyword>
<keyword id="KW-0067">ATP-binding</keyword>
<keyword id="KW-0138">CF(0)</keyword>
<keyword id="KW-0150">Chloroplast</keyword>
<keyword id="KW-0375">Hydrogen ion transport</keyword>
<keyword id="KW-0406">Ion transport</keyword>
<keyword id="KW-0472">Membrane</keyword>
<keyword id="KW-0547">Nucleotide-binding</keyword>
<keyword id="KW-0934">Plastid</keyword>
<keyword id="KW-1185">Reference proteome</keyword>
<keyword id="KW-0793">Thylakoid</keyword>
<keyword id="KW-0812">Transmembrane</keyword>
<keyword id="KW-1133">Transmembrane helix</keyword>
<keyword id="KW-0813">Transport</keyword>
<reference key="1">
    <citation type="journal article" date="2005" name="Plant Mol. Biol.">
        <title>Complete chloroplast genome sequence of Glycine max and comparative analyses with other legume genomes.</title>
        <authorList>
            <person name="Saski C."/>
            <person name="Lee S.-B."/>
            <person name="Daniell H."/>
            <person name="Wood T.C."/>
            <person name="Tomkins J."/>
            <person name="Kim H.-G."/>
            <person name="Jansen R.K."/>
        </authorList>
    </citation>
    <scope>NUCLEOTIDE SEQUENCE [LARGE SCALE GENOMIC DNA]</scope>
    <source>
        <strain>cv. PI 437654</strain>
    </source>
</reference>